<feature type="chain" id="PRO_1000066642" description="Acyl carrier protein">
    <location>
        <begin position="1"/>
        <end position="78"/>
    </location>
</feature>
<feature type="domain" description="Carrier" evidence="2">
    <location>
        <begin position="2"/>
        <end position="77"/>
    </location>
</feature>
<feature type="modified residue" description="O-(pantetheine 4'-phosphoryl)serine" evidence="2">
    <location>
        <position position="37"/>
    </location>
</feature>
<comment type="function">
    <text evidence="1">Carrier of the growing fatty acid chain in fatty acid biosynthesis.</text>
</comment>
<comment type="pathway">
    <text evidence="1">Lipid metabolism; fatty acid biosynthesis.</text>
</comment>
<comment type="subcellular location">
    <subcellularLocation>
        <location evidence="1">Cytoplasm</location>
    </subcellularLocation>
</comment>
<comment type="PTM">
    <text evidence="1">4'-phosphopantetheine is transferred from CoA to a specific serine of apo-ACP by AcpS. This modification is essential for activity because fatty acids are bound in thioester linkage to the sulfhydryl of the prosthetic group.</text>
</comment>
<comment type="similarity">
    <text evidence="1">Belongs to the acyl carrier protein (ACP) family.</text>
</comment>
<sequence length="78" mass="8511">MSNIEQQVKKIVAEQLGVNEADVKNESSFQDDLGADSLDTVELVMALEEAFGCEIPDEDAEKITTVQLAIDYINAHNG</sequence>
<organism>
    <name type="scientific">Neisseria meningitidis serogroup C / serotype 2a (strain ATCC 700532 / DSM 15464 / FAM18)</name>
    <dbReference type="NCBI Taxonomy" id="272831"/>
    <lineage>
        <taxon>Bacteria</taxon>
        <taxon>Pseudomonadati</taxon>
        <taxon>Pseudomonadota</taxon>
        <taxon>Betaproteobacteria</taxon>
        <taxon>Neisseriales</taxon>
        <taxon>Neisseriaceae</taxon>
        <taxon>Neisseria</taxon>
    </lineage>
</organism>
<protein>
    <recommendedName>
        <fullName evidence="1">Acyl carrier protein</fullName>
        <shortName evidence="1">ACP</shortName>
    </recommendedName>
</protein>
<keyword id="KW-0963">Cytoplasm</keyword>
<keyword id="KW-0275">Fatty acid biosynthesis</keyword>
<keyword id="KW-0276">Fatty acid metabolism</keyword>
<keyword id="KW-0444">Lipid biosynthesis</keyword>
<keyword id="KW-0443">Lipid metabolism</keyword>
<keyword id="KW-0596">Phosphopantetheine</keyword>
<keyword id="KW-0597">Phosphoprotein</keyword>
<gene>
    <name evidence="1" type="primary">acpP</name>
    <name type="ordered locus">NMC0217</name>
</gene>
<dbReference type="EMBL" id="AM421808">
    <property type="protein sequence ID" value="CAM09532.1"/>
    <property type="molecule type" value="Genomic_DNA"/>
</dbReference>
<dbReference type="RefSeq" id="WP_002215574.1">
    <property type="nucleotide sequence ID" value="NC_008767.1"/>
</dbReference>
<dbReference type="SMR" id="A1KRQ3"/>
<dbReference type="GeneID" id="93387307"/>
<dbReference type="KEGG" id="nmc:NMC0217"/>
<dbReference type="HOGENOM" id="CLU_108696_5_1_4"/>
<dbReference type="UniPathway" id="UPA00094"/>
<dbReference type="Proteomes" id="UP000002286">
    <property type="component" value="Chromosome"/>
</dbReference>
<dbReference type="GO" id="GO:0005829">
    <property type="term" value="C:cytosol"/>
    <property type="evidence" value="ECO:0007669"/>
    <property type="project" value="TreeGrafter"/>
</dbReference>
<dbReference type="GO" id="GO:0016020">
    <property type="term" value="C:membrane"/>
    <property type="evidence" value="ECO:0007669"/>
    <property type="project" value="GOC"/>
</dbReference>
<dbReference type="GO" id="GO:0000035">
    <property type="term" value="F:acyl binding"/>
    <property type="evidence" value="ECO:0007669"/>
    <property type="project" value="TreeGrafter"/>
</dbReference>
<dbReference type="GO" id="GO:0000036">
    <property type="term" value="F:acyl carrier activity"/>
    <property type="evidence" value="ECO:0007669"/>
    <property type="project" value="UniProtKB-UniRule"/>
</dbReference>
<dbReference type="GO" id="GO:0009245">
    <property type="term" value="P:lipid A biosynthetic process"/>
    <property type="evidence" value="ECO:0007669"/>
    <property type="project" value="TreeGrafter"/>
</dbReference>
<dbReference type="FunFam" id="1.10.1200.10:FF:000001">
    <property type="entry name" value="Acyl carrier protein"/>
    <property type="match status" value="1"/>
</dbReference>
<dbReference type="Gene3D" id="1.10.1200.10">
    <property type="entry name" value="ACP-like"/>
    <property type="match status" value="1"/>
</dbReference>
<dbReference type="HAMAP" id="MF_01217">
    <property type="entry name" value="Acyl_carrier"/>
    <property type="match status" value="1"/>
</dbReference>
<dbReference type="InterPro" id="IPR003231">
    <property type="entry name" value="ACP"/>
</dbReference>
<dbReference type="InterPro" id="IPR036736">
    <property type="entry name" value="ACP-like_sf"/>
</dbReference>
<dbReference type="InterPro" id="IPR009081">
    <property type="entry name" value="PP-bd_ACP"/>
</dbReference>
<dbReference type="InterPro" id="IPR006162">
    <property type="entry name" value="Ppantetheine_attach_site"/>
</dbReference>
<dbReference type="NCBIfam" id="TIGR00517">
    <property type="entry name" value="acyl_carrier"/>
    <property type="match status" value="1"/>
</dbReference>
<dbReference type="NCBIfam" id="NF002148">
    <property type="entry name" value="PRK00982.1-2"/>
    <property type="match status" value="1"/>
</dbReference>
<dbReference type="NCBIfam" id="NF002149">
    <property type="entry name" value="PRK00982.1-3"/>
    <property type="match status" value="1"/>
</dbReference>
<dbReference type="NCBIfam" id="NF002150">
    <property type="entry name" value="PRK00982.1-4"/>
    <property type="match status" value="1"/>
</dbReference>
<dbReference type="NCBIfam" id="NF002151">
    <property type="entry name" value="PRK00982.1-5"/>
    <property type="match status" value="1"/>
</dbReference>
<dbReference type="PANTHER" id="PTHR20863">
    <property type="entry name" value="ACYL CARRIER PROTEIN"/>
    <property type="match status" value="1"/>
</dbReference>
<dbReference type="PANTHER" id="PTHR20863:SF76">
    <property type="entry name" value="CARRIER DOMAIN-CONTAINING PROTEIN"/>
    <property type="match status" value="1"/>
</dbReference>
<dbReference type="Pfam" id="PF00550">
    <property type="entry name" value="PP-binding"/>
    <property type="match status" value="1"/>
</dbReference>
<dbReference type="SUPFAM" id="SSF47336">
    <property type="entry name" value="ACP-like"/>
    <property type="match status" value="1"/>
</dbReference>
<dbReference type="PROSITE" id="PS50075">
    <property type="entry name" value="CARRIER"/>
    <property type="match status" value="1"/>
</dbReference>
<dbReference type="PROSITE" id="PS00012">
    <property type="entry name" value="PHOSPHOPANTETHEINE"/>
    <property type="match status" value="1"/>
</dbReference>
<proteinExistence type="inferred from homology"/>
<name>ACP_NEIMF</name>
<reference key="1">
    <citation type="journal article" date="2007" name="PLoS Genet.">
        <title>Meningococcal genetic variation mechanisms viewed through comparative analysis of serogroup C strain FAM18.</title>
        <authorList>
            <person name="Bentley S.D."/>
            <person name="Vernikos G.S."/>
            <person name="Snyder L.A.S."/>
            <person name="Churcher C."/>
            <person name="Arrowsmith C."/>
            <person name="Chillingworth T."/>
            <person name="Cronin A."/>
            <person name="Davis P.H."/>
            <person name="Holroyd N.E."/>
            <person name="Jagels K."/>
            <person name="Maddison M."/>
            <person name="Moule S."/>
            <person name="Rabbinowitsch E."/>
            <person name="Sharp S."/>
            <person name="Unwin L."/>
            <person name="Whitehead S."/>
            <person name="Quail M.A."/>
            <person name="Achtman M."/>
            <person name="Barrell B.G."/>
            <person name="Saunders N.J."/>
            <person name="Parkhill J."/>
        </authorList>
    </citation>
    <scope>NUCLEOTIDE SEQUENCE [LARGE SCALE GENOMIC DNA]</scope>
    <source>
        <strain>ATCC 700532 / DSM 15464 / FAM18</strain>
    </source>
</reference>
<evidence type="ECO:0000255" key="1">
    <source>
        <dbReference type="HAMAP-Rule" id="MF_01217"/>
    </source>
</evidence>
<evidence type="ECO:0000255" key="2">
    <source>
        <dbReference type="PROSITE-ProRule" id="PRU00258"/>
    </source>
</evidence>
<accession>A1KRQ3</accession>